<accession>B5Z2A2</accession>
<name>LUXS_ECO5E</name>
<sequence>MPLLDSFTVDHTRMEAPAVRVAKTMNTPHGDAITVFDLRFCVPNKEVMPERGIHTLEHLFAGFMRNHLNGNGVEIIDISPMGCRTGFYMSLIGTPDEQRVADVWKAAMEDVLKVQDQNQIPELNVYQCGTYQMHSLQEAQDIARSILERDVRINSNEELALPKEKLQELHI</sequence>
<keyword id="KW-0071">Autoinducer synthesis</keyword>
<keyword id="KW-0408">Iron</keyword>
<keyword id="KW-0456">Lyase</keyword>
<keyword id="KW-0479">Metal-binding</keyword>
<keyword id="KW-0673">Quorum sensing</keyword>
<comment type="function">
    <text evidence="1">Involved in the synthesis of autoinducer 2 (AI-2) which is secreted by bacteria and is used to communicate both the cell density and the metabolic potential of the environment. The regulation of gene expression in response to changes in cell density is called quorum sensing. Catalyzes the transformation of S-ribosylhomocysteine (RHC) to homocysteine (HC) and 4,5-dihydroxy-2,3-pentadione (DPD).</text>
</comment>
<comment type="catalytic activity">
    <reaction evidence="1">
        <text>S-(5-deoxy-D-ribos-5-yl)-L-homocysteine = (S)-4,5-dihydroxypentane-2,3-dione + L-homocysteine</text>
        <dbReference type="Rhea" id="RHEA:17753"/>
        <dbReference type="ChEBI" id="CHEBI:29484"/>
        <dbReference type="ChEBI" id="CHEBI:58195"/>
        <dbReference type="ChEBI" id="CHEBI:58199"/>
        <dbReference type="EC" id="4.4.1.21"/>
    </reaction>
</comment>
<comment type="cofactor">
    <cofactor evidence="1">
        <name>Fe cation</name>
        <dbReference type="ChEBI" id="CHEBI:24875"/>
    </cofactor>
    <text evidence="1">Binds 1 Fe cation per subunit.</text>
</comment>
<comment type="subunit">
    <text evidence="1">Homodimer.</text>
</comment>
<comment type="similarity">
    <text evidence="1">Belongs to the LuxS family.</text>
</comment>
<evidence type="ECO:0000255" key="1">
    <source>
        <dbReference type="HAMAP-Rule" id="MF_00091"/>
    </source>
</evidence>
<organism>
    <name type="scientific">Escherichia coli O157:H7 (strain EC4115 / EHEC)</name>
    <dbReference type="NCBI Taxonomy" id="444450"/>
    <lineage>
        <taxon>Bacteria</taxon>
        <taxon>Pseudomonadati</taxon>
        <taxon>Pseudomonadota</taxon>
        <taxon>Gammaproteobacteria</taxon>
        <taxon>Enterobacterales</taxon>
        <taxon>Enterobacteriaceae</taxon>
        <taxon>Escherichia</taxon>
    </lineage>
</organism>
<reference key="1">
    <citation type="journal article" date="2011" name="Proc. Natl. Acad. Sci. U.S.A.">
        <title>Genomic anatomy of Escherichia coli O157:H7 outbreaks.</title>
        <authorList>
            <person name="Eppinger M."/>
            <person name="Mammel M.K."/>
            <person name="Leclerc J.E."/>
            <person name="Ravel J."/>
            <person name="Cebula T.A."/>
        </authorList>
    </citation>
    <scope>NUCLEOTIDE SEQUENCE [LARGE SCALE GENOMIC DNA]</scope>
    <source>
        <strain>EC4115 / EHEC</strain>
    </source>
</reference>
<gene>
    <name evidence="1" type="primary">luxS</name>
    <name type="ordered locus">ECH74115_3932</name>
</gene>
<protein>
    <recommendedName>
        <fullName evidence="1">S-ribosylhomocysteine lyase</fullName>
        <ecNumber evidence="1">4.4.1.21</ecNumber>
    </recommendedName>
    <alternativeName>
        <fullName evidence="1">AI-2 synthesis protein</fullName>
    </alternativeName>
    <alternativeName>
        <fullName evidence="1">Autoinducer-2 production protein LuxS</fullName>
    </alternativeName>
</protein>
<proteinExistence type="inferred from homology"/>
<feature type="chain" id="PRO_1000093304" description="S-ribosylhomocysteine lyase">
    <location>
        <begin position="1"/>
        <end position="171"/>
    </location>
</feature>
<feature type="binding site" evidence="1">
    <location>
        <position position="54"/>
    </location>
    <ligand>
        <name>Fe cation</name>
        <dbReference type="ChEBI" id="CHEBI:24875"/>
    </ligand>
</feature>
<feature type="binding site" evidence="1">
    <location>
        <position position="58"/>
    </location>
    <ligand>
        <name>Fe cation</name>
        <dbReference type="ChEBI" id="CHEBI:24875"/>
    </ligand>
</feature>
<feature type="binding site" evidence="1">
    <location>
        <position position="128"/>
    </location>
    <ligand>
        <name>Fe cation</name>
        <dbReference type="ChEBI" id="CHEBI:24875"/>
    </ligand>
</feature>
<dbReference type="EC" id="4.4.1.21" evidence="1"/>
<dbReference type="EMBL" id="CP001164">
    <property type="protein sequence ID" value="ACI37404.1"/>
    <property type="molecule type" value="Genomic_DNA"/>
</dbReference>
<dbReference type="RefSeq" id="WP_001130215.1">
    <property type="nucleotide sequence ID" value="NC_011353.1"/>
</dbReference>
<dbReference type="SMR" id="B5Z2A2"/>
<dbReference type="KEGG" id="ecf:ECH74115_3932"/>
<dbReference type="HOGENOM" id="CLU_107531_2_0_6"/>
<dbReference type="GO" id="GO:0005506">
    <property type="term" value="F:iron ion binding"/>
    <property type="evidence" value="ECO:0007669"/>
    <property type="project" value="InterPro"/>
</dbReference>
<dbReference type="GO" id="GO:0043768">
    <property type="term" value="F:S-ribosylhomocysteine lyase activity"/>
    <property type="evidence" value="ECO:0007669"/>
    <property type="project" value="UniProtKB-UniRule"/>
</dbReference>
<dbReference type="GO" id="GO:0009372">
    <property type="term" value="P:quorum sensing"/>
    <property type="evidence" value="ECO:0007669"/>
    <property type="project" value="UniProtKB-UniRule"/>
</dbReference>
<dbReference type="FunFam" id="3.30.1360.80:FF:000001">
    <property type="entry name" value="S-ribosylhomocysteine lyase"/>
    <property type="match status" value="1"/>
</dbReference>
<dbReference type="Gene3D" id="3.30.1360.80">
    <property type="entry name" value="S-ribosylhomocysteinase (LuxS)"/>
    <property type="match status" value="1"/>
</dbReference>
<dbReference type="HAMAP" id="MF_00091">
    <property type="entry name" value="LuxS"/>
    <property type="match status" value="1"/>
</dbReference>
<dbReference type="InterPro" id="IPR037005">
    <property type="entry name" value="LuxS_sf"/>
</dbReference>
<dbReference type="InterPro" id="IPR011249">
    <property type="entry name" value="Metalloenz_LuxS/M16"/>
</dbReference>
<dbReference type="InterPro" id="IPR003815">
    <property type="entry name" value="S-ribosylhomocysteinase"/>
</dbReference>
<dbReference type="NCBIfam" id="NF002602">
    <property type="entry name" value="PRK02260.1-2"/>
    <property type="match status" value="1"/>
</dbReference>
<dbReference type="PANTHER" id="PTHR35799">
    <property type="entry name" value="S-RIBOSYLHOMOCYSTEINE LYASE"/>
    <property type="match status" value="1"/>
</dbReference>
<dbReference type="PANTHER" id="PTHR35799:SF1">
    <property type="entry name" value="S-RIBOSYLHOMOCYSTEINE LYASE"/>
    <property type="match status" value="1"/>
</dbReference>
<dbReference type="Pfam" id="PF02664">
    <property type="entry name" value="LuxS"/>
    <property type="match status" value="1"/>
</dbReference>
<dbReference type="PIRSF" id="PIRSF006160">
    <property type="entry name" value="AI2"/>
    <property type="match status" value="1"/>
</dbReference>
<dbReference type="PRINTS" id="PR01487">
    <property type="entry name" value="LUXSPROTEIN"/>
</dbReference>
<dbReference type="SUPFAM" id="SSF63411">
    <property type="entry name" value="LuxS/MPP-like metallohydrolase"/>
    <property type="match status" value="1"/>
</dbReference>